<accession>B8HYK3</accession>
<comment type="subcellular location">
    <subcellularLocation>
        <location evidence="1">Cytoplasm</location>
    </subcellularLocation>
</comment>
<comment type="similarity">
    <text evidence="1">Belongs to the TACO1 family.</text>
</comment>
<keyword id="KW-0963">Cytoplasm</keyword>
<keyword id="KW-0238">DNA-binding</keyword>
<keyword id="KW-0804">Transcription</keyword>
<keyword id="KW-0805">Transcription regulation</keyword>
<reference key="1">
    <citation type="journal article" date="2011" name="MBio">
        <title>Novel metabolic attributes of the genus Cyanothece, comprising a group of unicellular nitrogen-fixing Cyanobacteria.</title>
        <authorList>
            <person name="Bandyopadhyay A."/>
            <person name="Elvitigala T."/>
            <person name="Welsh E."/>
            <person name="Stockel J."/>
            <person name="Liberton M."/>
            <person name="Min H."/>
            <person name="Sherman L.A."/>
            <person name="Pakrasi H.B."/>
        </authorList>
    </citation>
    <scope>NUCLEOTIDE SEQUENCE [LARGE SCALE GENOMIC DNA]</scope>
    <source>
        <strain>PCC 7425 / ATCC 29141</strain>
    </source>
</reference>
<sequence length="254" mass="27518">MAGHSKWANIKRQKARVDAKKGAVFARLSRAIIVAARHGIPDPEGNFQLRSAIEKAKAAGIPNDNIERAIAKGAGKLGADSELEEIRYEGYGLGGVAILIEAMTDNRNRTAADLRAAFNKHGGNLGETGCVGWMFNQVGIVTIAAPADEEAFLEVLLEAGADTYELIETEEGTIAEIVTEVTNLEHLATVLKAQHYPVREAESRWVAINMVEISDPEQGRRLLKLMDALEDLDDVQSVTANFAIGDNLLTEMLV</sequence>
<organism>
    <name type="scientific">Cyanothece sp. (strain PCC 7425 / ATCC 29141)</name>
    <dbReference type="NCBI Taxonomy" id="395961"/>
    <lineage>
        <taxon>Bacteria</taxon>
        <taxon>Bacillati</taxon>
        <taxon>Cyanobacteriota</taxon>
        <taxon>Cyanophyceae</taxon>
        <taxon>Gomontiellales</taxon>
        <taxon>Cyanothecaceae</taxon>
        <taxon>Cyanothece</taxon>
    </lineage>
</organism>
<name>Y4347_CYAP4</name>
<proteinExistence type="inferred from homology"/>
<evidence type="ECO:0000255" key="1">
    <source>
        <dbReference type="HAMAP-Rule" id="MF_00693"/>
    </source>
</evidence>
<protein>
    <recommendedName>
        <fullName evidence="1">Probable transcriptional regulatory protein Cyan7425_4347</fullName>
    </recommendedName>
</protein>
<dbReference type="EMBL" id="CP001344">
    <property type="protein sequence ID" value="ACL46657.1"/>
    <property type="molecule type" value="Genomic_DNA"/>
</dbReference>
<dbReference type="SMR" id="B8HYK3"/>
<dbReference type="STRING" id="395961.Cyan7425_4347"/>
<dbReference type="KEGG" id="cyn:Cyan7425_4347"/>
<dbReference type="eggNOG" id="COG0217">
    <property type="taxonomic scope" value="Bacteria"/>
</dbReference>
<dbReference type="HOGENOM" id="CLU_062974_2_2_3"/>
<dbReference type="OrthoDB" id="9781053at2"/>
<dbReference type="GO" id="GO:0005829">
    <property type="term" value="C:cytosol"/>
    <property type="evidence" value="ECO:0007669"/>
    <property type="project" value="TreeGrafter"/>
</dbReference>
<dbReference type="GO" id="GO:0003677">
    <property type="term" value="F:DNA binding"/>
    <property type="evidence" value="ECO:0007669"/>
    <property type="project" value="UniProtKB-UniRule"/>
</dbReference>
<dbReference type="GO" id="GO:0006355">
    <property type="term" value="P:regulation of DNA-templated transcription"/>
    <property type="evidence" value="ECO:0007669"/>
    <property type="project" value="UniProtKB-UniRule"/>
</dbReference>
<dbReference type="FunFam" id="1.10.10.200:FF:000002">
    <property type="entry name" value="Probable transcriptional regulatory protein CLM62_37755"/>
    <property type="match status" value="1"/>
</dbReference>
<dbReference type="Gene3D" id="1.10.10.200">
    <property type="match status" value="1"/>
</dbReference>
<dbReference type="Gene3D" id="3.30.70.980">
    <property type="match status" value="2"/>
</dbReference>
<dbReference type="HAMAP" id="MF_00693">
    <property type="entry name" value="Transcrip_reg_TACO1"/>
    <property type="match status" value="1"/>
</dbReference>
<dbReference type="InterPro" id="IPR017856">
    <property type="entry name" value="Integrase-like_N"/>
</dbReference>
<dbReference type="InterPro" id="IPR048300">
    <property type="entry name" value="TACO1_YebC-like_2nd/3rd_dom"/>
</dbReference>
<dbReference type="InterPro" id="IPR049083">
    <property type="entry name" value="TACO1_YebC_N"/>
</dbReference>
<dbReference type="InterPro" id="IPR002876">
    <property type="entry name" value="Transcrip_reg_TACO1-like"/>
</dbReference>
<dbReference type="InterPro" id="IPR026564">
    <property type="entry name" value="Transcrip_reg_TACO1-like_dom3"/>
</dbReference>
<dbReference type="InterPro" id="IPR029072">
    <property type="entry name" value="YebC-like"/>
</dbReference>
<dbReference type="NCBIfam" id="NF001030">
    <property type="entry name" value="PRK00110.1"/>
    <property type="match status" value="1"/>
</dbReference>
<dbReference type="NCBIfam" id="NF009044">
    <property type="entry name" value="PRK12378.1"/>
    <property type="match status" value="1"/>
</dbReference>
<dbReference type="NCBIfam" id="TIGR01033">
    <property type="entry name" value="YebC/PmpR family DNA-binding transcriptional regulator"/>
    <property type="match status" value="1"/>
</dbReference>
<dbReference type="PANTHER" id="PTHR12532:SF6">
    <property type="entry name" value="TRANSCRIPTIONAL REGULATORY PROTEIN YEBC-RELATED"/>
    <property type="match status" value="1"/>
</dbReference>
<dbReference type="PANTHER" id="PTHR12532">
    <property type="entry name" value="TRANSLATIONAL ACTIVATOR OF CYTOCHROME C OXIDASE 1"/>
    <property type="match status" value="1"/>
</dbReference>
<dbReference type="Pfam" id="PF20772">
    <property type="entry name" value="TACO1_YebC_N"/>
    <property type="match status" value="1"/>
</dbReference>
<dbReference type="Pfam" id="PF01709">
    <property type="entry name" value="Transcrip_reg"/>
    <property type="match status" value="1"/>
</dbReference>
<dbReference type="SUPFAM" id="SSF75625">
    <property type="entry name" value="YebC-like"/>
    <property type="match status" value="1"/>
</dbReference>
<gene>
    <name type="ordered locus">Cyan7425_4347</name>
</gene>
<feature type="chain" id="PRO_1000200092" description="Probable transcriptional regulatory protein Cyan7425_4347">
    <location>
        <begin position="1"/>
        <end position="254"/>
    </location>
</feature>